<protein>
    <recommendedName>
        <fullName evidence="1">Cytochrome b6-f complex subunit 6</fullName>
    </recommendedName>
    <alternativeName>
        <fullName evidence="1">Cytochrome b6-f complex subunit PetL</fullName>
    </alternativeName>
    <alternativeName>
        <fullName evidence="1">Cytochrome b6-f complex subunit VI</fullName>
    </alternativeName>
</protein>
<evidence type="ECO:0000255" key="1">
    <source>
        <dbReference type="HAMAP-Rule" id="MF_00433"/>
    </source>
</evidence>
<comment type="function">
    <text evidence="1">Component of the cytochrome b6-f complex, which mediates electron transfer between photosystem II (PSII) and photosystem I (PSI), cyclic electron flow around PSI, and state transitions. PetL is important for photoautotrophic growth as well as for electron transfer efficiency and stability of the cytochrome b6-f complex.</text>
</comment>
<comment type="subunit">
    <text evidence="1">The 4 large subunits of the cytochrome b6-f complex are cytochrome b6, subunit IV (17 kDa polypeptide, PetD), cytochrome f and the Rieske protein, while the 4 small subunits are PetG, PetL, PetM and PetN. The complex functions as a dimer.</text>
</comment>
<comment type="subcellular location">
    <subcellularLocation>
        <location evidence="1">Plastid</location>
        <location evidence="1">Chloroplast thylakoid membrane</location>
        <topology evidence="1">Single-pass membrane protein</topology>
    </subcellularLocation>
</comment>
<comment type="similarity">
    <text evidence="1">Belongs to the PetL family.</text>
</comment>
<gene>
    <name evidence="1" type="primary">petL</name>
</gene>
<organism>
    <name type="scientific">Porphyra purpurea</name>
    <name type="common">Red seaweed</name>
    <name type="synonym">Ulva purpurea</name>
    <dbReference type="NCBI Taxonomy" id="2787"/>
    <lineage>
        <taxon>Eukaryota</taxon>
        <taxon>Rhodophyta</taxon>
        <taxon>Bangiophyceae</taxon>
        <taxon>Bangiales</taxon>
        <taxon>Bangiaceae</taxon>
        <taxon>Porphyra</taxon>
    </lineage>
</organism>
<geneLocation type="chloroplast"/>
<reference key="1">
    <citation type="journal article" date="1995" name="Plant Mol. Biol. Rep.">
        <title>Complete nucleotide sequence of the Porphyra purpurea chloroplast genome.</title>
        <authorList>
            <person name="Reith M.E."/>
            <person name="Munholland J."/>
        </authorList>
    </citation>
    <scope>NUCLEOTIDE SEQUENCE [LARGE SCALE GENOMIC DNA]</scope>
    <source>
        <strain>Avonport</strain>
    </source>
</reference>
<accession>P51221</accession>
<proteinExistence type="inferred from homology"/>
<feature type="chain" id="PRO_0000220472" description="Cytochrome b6-f complex subunit 6">
    <location>
        <begin position="1"/>
        <end position="31"/>
    </location>
</feature>
<feature type="transmembrane region" description="Helical" evidence="1">
    <location>
        <begin position="3"/>
        <end position="23"/>
    </location>
</feature>
<sequence>MSLFIGYIIFLVAFFGLATGLFLGLKAIKLI</sequence>
<dbReference type="EMBL" id="U38804">
    <property type="protein sequence ID" value="AAC08107.1"/>
    <property type="molecule type" value="Genomic_DNA"/>
</dbReference>
<dbReference type="SMR" id="P51221"/>
<dbReference type="GO" id="GO:0009535">
    <property type="term" value="C:chloroplast thylakoid membrane"/>
    <property type="evidence" value="ECO:0007669"/>
    <property type="project" value="UniProtKB-SubCell"/>
</dbReference>
<dbReference type="GO" id="GO:0009512">
    <property type="term" value="C:cytochrome b6f complex"/>
    <property type="evidence" value="ECO:0007669"/>
    <property type="project" value="InterPro"/>
</dbReference>
<dbReference type="GO" id="GO:0045158">
    <property type="term" value="F:electron transporter, transferring electrons within cytochrome b6/f complex of photosystem II activity"/>
    <property type="evidence" value="ECO:0007669"/>
    <property type="project" value="UniProtKB-UniRule"/>
</dbReference>
<dbReference type="GO" id="GO:0015979">
    <property type="term" value="P:photosynthesis"/>
    <property type="evidence" value="ECO:0007669"/>
    <property type="project" value="UniProtKB-KW"/>
</dbReference>
<dbReference type="HAMAP" id="MF_00433">
    <property type="entry name" value="Cytb6_f_PetL"/>
    <property type="match status" value="1"/>
</dbReference>
<dbReference type="InterPro" id="IPR007802">
    <property type="entry name" value="Cyt_b6/f_cplx_su6"/>
</dbReference>
<dbReference type="Pfam" id="PF05115">
    <property type="entry name" value="PetL"/>
    <property type="match status" value="1"/>
</dbReference>
<dbReference type="SUPFAM" id="SSF103436">
    <property type="entry name" value="PetL subunit of the cytochrome b6f complex"/>
    <property type="match status" value="1"/>
</dbReference>
<name>PETL_PORPU</name>
<keyword id="KW-0150">Chloroplast</keyword>
<keyword id="KW-0249">Electron transport</keyword>
<keyword id="KW-0472">Membrane</keyword>
<keyword id="KW-0602">Photosynthesis</keyword>
<keyword id="KW-0934">Plastid</keyword>
<keyword id="KW-0793">Thylakoid</keyword>
<keyword id="KW-0812">Transmembrane</keyword>
<keyword id="KW-1133">Transmembrane helix</keyword>
<keyword id="KW-0813">Transport</keyword>